<feature type="chain" id="PRO_0000170122" description="4-alpha-glucanotransferase">
    <location>
        <begin position="1"/>
        <end position="530"/>
    </location>
</feature>
<organism>
    <name type="scientific">Chlamydia caviae (strain ATCC VR-813 / DSM 19441 / 03DC25 / GPIC)</name>
    <name type="common">Chlamydophila caviae</name>
    <dbReference type="NCBI Taxonomy" id="227941"/>
    <lineage>
        <taxon>Bacteria</taxon>
        <taxon>Pseudomonadati</taxon>
        <taxon>Chlamydiota</taxon>
        <taxon>Chlamydiia</taxon>
        <taxon>Chlamydiales</taxon>
        <taxon>Chlamydiaceae</taxon>
        <taxon>Chlamydia/Chlamydophila group</taxon>
        <taxon>Chlamydia</taxon>
    </lineage>
</organism>
<dbReference type="EC" id="2.4.1.25"/>
<dbReference type="EMBL" id="U88070">
    <property type="protein sequence ID" value="AAB71512.1"/>
    <property type="molecule type" value="Genomic_DNA"/>
</dbReference>
<dbReference type="EMBL" id="AE015925">
    <property type="protein sequence ID" value="AAP05202.1"/>
    <property type="molecule type" value="Genomic_DNA"/>
</dbReference>
<dbReference type="RefSeq" id="WP_011006418.1">
    <property type="nucleotide sequence ID" value="NC_003361.3"/>
</dbReference>
<dbReference type="SMR" id="O34022"/>
<dbReference type="STRING" id="227941.CCA_00456"/>
<dbReference type="CAZy" id="GH77">
    <property type="family name" value="Glycoside Hydrolase Family 77"/>
</dbReference>
<dbReference type="KEGG" id="cca:CCA_00456"/>
<dbReference type="eggNOG" id="COG1640">
    <property type="taxonomic scope" value="Bacteria"/>
</dbReference>
<dbReference type="HOGENOM" id="CLU_014132_2_1_0"/>
<dbReference type="OrthoDB" id="9811841at2"/>
<dbReference type="Proteomes" id="UP000002193">
    <property type="component" value="Chromosome"/>
</dbReference>
<dbReference type="GO" id="GO:0005737">
    <property type="term" value="C:cytoplasm"/>
    <property type="evidence" value="ECO:0007669"/>
    <property type="project" value="UniProtKB-SubCell"/>
</dbReference>
<dbReference type="GO" id="GO:0004134">
    <property type="term" value="F:4-alpha-glucanotransferase activity"/>
    <property type="evidence" value="ECO:0007669"/>
    <property type="project" value="UniProtKB-EC"/>
</dbReference>
<dbReference type="GO" id="GO:0005975">
    <property type="term" value="P:carbohydrate metabolic process"/>
    <property type="evidence" value="ECO:0007669"/>
    <property type="project" value="InterPro"/>
</dbReference>
<dbReference type="Gene3D" id="3.20.20.80">
    <property type="entry name" value="Glycosidases"/>
    <property type="match status" value="1"/>
</dbReference>
<dbReference type="InterPro" id="IPR003385">
    <property type="entry name" value="Glyco_hydro_77"/>
</dbReference>
<dbReference type="InterPro" id="IPR017853">
    <property type="entry name" value="Glycoside_hydrolase_SF"/>
</dbReference>
<dbReference type="NCBIfam" id="NF011081">
    <property type="entry name" value="PRK14508.1-4"/>
    <property type="match status" value="1"/>
</dbReference>
<dbReference type="PANTHER" id="PTHR32518">
    <property type="match status" value="1"/>
</dbReference>
<dbReference type="PANTHER" id="PTHR32518:SF3">
    <property type="entry name" value="4-ALPHA-GLUCANOTRANSFERASE"/>
    <property type="match status" value="1"/>
</dbReference>
<dbReference type="Pfam" id="PF02446">
    <property type="entry name" value="Glyco_hydro_77"/>
    <property type="match status" value="1"/>
</dbReference>
<dbReference type="SUPFAM" id="SSF51445">
    <property type="entry name" value="(Trans)glycosidases"/>
    <property type="match status" value="1"/>
</dbReference>
<sequence>MTPFSKALRCIQNSPAKQSWKTLGIMPKHGICLPLFSLHTRNSCGIGEFLDLIPMISWCRKHGFQIIQILPINDSGEDSSPYNSISSVALNPLYLSLASLPHAQSVAYANAKLRTMQQLSKLPYVHYPQVKAAKWEFLRDYYQYVVKIGALKDEDFEIFCEKEKYWLRPYTVFRSIKYHLKGAPVNNWPKAYTDIKNFTEFEKQFQDECSFFSYLQYLCFQQMSQVKAFADDNHVFLKGDLPILISKDSCDVWYYRQFFSSSGSAGAPPDIYNTEGQNWHLPIYNMHNLVQDNYTWWKARLRYAENFYSLYRLDHIVGLFRLWVWDTSGNGKFQPDDPKEYLPQGTDILTQILRASRMLPIGEDLGSVPTDVKETLVKLGICGTRIPRWERNWEGDGNFIPLGEYSPLSVTSLSTHDSDTLALWWRHAPKEAQKFAQFLGMFFTPVLAEEDQKHILTLSHKTSSIFHINLINDYLALCPDLVSNNLKYERINMPGTVSKNNWVYRIKPSVEEILTHDAFNANIADIFSKI</sequence>
<evidence type="ECO:0000250" key="1"/>
<evidence type="ECO:0000305" key="2"/>
<gene>
    <name type="primary">malQ</name>
    <name type="ordered locus">CCA_00456</name>
</gene>
<name>MALQ_CHLCV</name>
<proteinExistence type="inferred from homology"/>
<keyword id="KW-0119">Carbohydrate metabolism</keyword>
<keyword id="KW-0963">Cytoplasm</keyword>
<keyword id="KW-0328">Glycosyltransferase</keyword>
<keyword id="KW-0808">Transferase</keyword>
<accession>O34022</accession>
<comment type="catalytic activity">
    <reaction>
        <text>Transfers a segment of a (1-&gt;4)-alpha-D-glucan to a new position in an acceptor, which may be glucose or a (1-&gt;4)-alpha-D-glucan.</text>
        <dbReference type="EC" id="2.4.1.25"/>
    </reaction>
</comment>
<comment type="subcellular location">
    <subcellularLocation>
        <location evidence="1">Cytoplasm</location>
    </subcellularLocation>
</comment>
<comment type="similarity">
    <text evidence="2">Belongs to the disproportionating enzyme family.</text>
</comment>
<protein>
    <recommendedName>
        <fullName>4-alpha-glucanotransferase</fullName>
        <ecNumber>2.4.1.25</ecNumber>
    </recommendedName>
    <alternativeName>
        <fullName>Amylomaltase</fullName>
    </alternativeName>
    <alternativeName>
        <fullName>Disproportionating enzyme</fullName>
        <shortName>D-enzyme</shortName>
    </alternativeName>
</protein>
<reference key="1">
    <citation type="journal article" date="1997" name="Mol. Microbiol.">
        <title>Type III secretion genes identify a putative virulence locus of Chlamydia.</title>
        <authorList>
            <person name="Hsia R.-C."/>
            <person name="Pannekoek Y."/>
            <person name="Ingerowski E."/>
            <person name="Bavoil P.M."/>
        </authorList>
    </citation>
    <scope>NUCLEOTIDE SEQUENCE [GENOMIC DNA]</scope>
    <source>
        <strain>ATCC VR-813 / DSM 19441 / 03DC25 / GPIC</strain>
    </source>
</reference>
<reference key="2">
    <citation type="journal article" date="2003" name="Nucleic Acids Res.">
        <title>Genome sequence of Chlamydophila caviae (Chlamydia psittaci GPIC): examining the role of niche-specific genes in the evolution of the Chlamydiaceae.</title>
        <authorList>
            <person name="Read T.D."/>
            <person name="Myers G.S.A."/>
            <person name="Brunham R.C."/>
            <person name="Nelson W.C."/>
            <person name="Paulsen I.T."/>
            <person name="Heidelberg J.F."/>
            <person name="Holtzapple E.K."/>
            <person name="Khouri H.M."/>
            <person name="Federova N.B."/>
            <person name="Carty H.A."/>
            <person name="Umayam L.A."/>
            <person name="Haft D.H."/>
            <person name="Peterson J.D."/>
            <person name="Beanan M.J."/>
            <person name="White O."/>
            <person name="Salzberg S.L."/>
            <person name="Hsia R.-C."/>
            <person name="McClarty G."/>
            <person name="Rank R.G."/>
            <person name="Bavoil P.M."/>
            <person name="Fraser C.M."/>
        </authorList>
    </citation>
    <scope>NUCLEOTIDE SEQUENCE [LARGE SCALE GENOMIC DNA]</scope>
    <source>
        <strain>ATCC VR-813 / DSM 19441 / 03DC25 / GPIC</strain>
    </source>
</reference>